<gene>
    <name evidence="1" type="primary">hcp</name>
    <name type="ordered locus">Cthe_0036</name>
</gene>
<feature type="chain" id="PRO_1000009151" description="Hydroxylamine reductase">
    <location>
        <begin position="1"/>
        <end position="542"/>
    </location>
</feature>
<feature type="binding site" evidence="1">
    <location>
        <position position="5"/>
    </location>
    <ligand>
        <name>[4Fe-4S] cluster</name>
        <dbReference type="ChEBI" id="CHEBI:49883"/>
    </ligand>
</feature>
<feature type="binding site" evidence="1">
    <location>
        <position position="8"/>
    </location>
    <ligand>
        <name>[4Fe-4S] cluster</name>
        <dbReference type="ChEBI" id="CHEBI:49883"/>
    </ligand>
</feature>
<feature type="binding site" evidence="1">
    <location>
        <position position="17"/>
    </location>
    <ligand>
        <name>[4Fe-4S] cluster</name>
        <dbReference type="ChEBI" id="CHEBI:49883"/>
    </ligand>
</feature>
<feature type="binding site" evidence="1">
    <location>
        <position position="23"/>
    </location>
    <ligand>
        <name>[4Fe-4S] cluster</name>
        <dbReference type="ChEBI" id="CHEBI:49883"/>
    </ligand>
</feature>
<feature type="binding site" evidence="1">
    <location>
        <position position="237"/>
    </location>
    <ligand>
        <name>hybrid [4Fe-2O-2S] cluster</name>
        <dbReference type="ChEBI" id="CHEBI:60519"/>
    </ligand>
</feature>
<feature type="binding site" evidence="1">
    <location>
        <position position="261"/>
    </location>
    <ligand>
        <name>hybrid [4Fe-2O-2S] cluster</name>
        <dbReference type="ChEBI" id="CHEBI:60519"/>
    </ligand>
</feature>
<feature type="binding site" evidence="1">
    <location>
        <position position="305"/>
    </location>
    <ligand>
        <name>hybrid [4Fe-2O-2S] cluster</name>
        <dbReference type="ChEBI" id="CHEBI:60519"/>
    </ligand>
</feature>
<feature type="binding site" description="via persulfide group" evidence="1">
    <location>
        <position position="397"/>
    </location>
    <ligand>
        <name>hybrid [4Fe-2O-2S] cluster</name>
        <dbReference type="ChEBI" id="CHEBI:60519"/>
    </ligand>
</feature>
<feature type="binding site" evidence="1">
    <location>
        <position position="425"/>
    </location>
    <ligand>
        <name>hybrid [4Fe-2O-2S] cluster</name>
        <dbReference type="ChEBI" id="CHEBI:60519"/>
    </ligand>
</feature>
<feature type="binding site" evidence="1">
    <location>
        <position position="450"/>
    </location>
    <ligand>
        <name>hybrid [4Fe-2O-2S] cluster</name>
        <dbReference type="ChEBI" id="CHEBI:60519"/>
    </ligand>
</feature>
<feature type="binding site" evidence="1">
    <location>
        <position position="485"/>
    </location>
    <ligand>
        <name>hybrid [4Fe-2O-2S] cluster</name>
        <dbReference type="ChEBI" id="CHEBI:60519"/>
    </ligand>
</feature>
<feature type="binding site" evidence="1">
    <location>
        <position position="487"/>
    </location>
    <ligand>
        <name>hybrid [4Fe-2O-2S] cluster</name>
        <dbReference type="ChEBI" id="CHEBI:60519"/>
    </ligand>
</feature>
<feature type="modified residue" description="Cysteine persulfide" evidence="1">
    <location>
        <position position="397"/>
    </location>
</feature>
<dbReference type="EC" id="1.7.99.1" evidence="1"/>
<dbReference type="EMBL" id="CP000568">
    <property type="protein sequence ID" value="ABN51277.1"/>
    <property type="molecule type" value="Genomic_DNA"/>
</dbReference>
<dbReference type="RefSeq" id="WP_003511951.1">
    <property type="nucleotide sequence ID" value="NC_009012.1"/>
</dbReference>
<dbReference type="SMR" id="A3DBE8"/>
<dbReference type="STRING" id="203119.Cthe_0036"/>
<dbReference type="GeneID" id="35803268"/>
<dbReference type="KEGG" id="cth:Cthe_0036"/>
<dbReference type="eggNOG" id="COG1151">
    <property type="taxonomic scope" value="Bacteria"/>
</dbReference>
<dbReference type="HOGENOM" id="CLU_038344_2_0_9"/>
<dbReference type="OrthoDB" id="9761526at2"/>
<dbReference type="Proteomes" id="UP000002145">
    <property type="component" value="Chromosome"/>
</dbReference>
<dbReference type="GO" id="GO:0005737">
    <property type="term" value="C:cytoplasm"/>
    <property type="evidence" value="ECO:0007669"/>
    <property type="project" value="UniProtKB-SubCell"/>
</dbReference>
<dbReference type="GO" id="GO:0051539">
    <property type="term" value="F:4 iron, 4 sulfur cluster binding"/>
    <property type="evidence" value="ECO:0007669"/>
    <property type="project" value="UniProtKB-KW"/>
</dbReference>
<dbReference type="GO" id="GO:0050418">
    <property type="term" value="F:hydroxylamine reductase activity"/>
    <property type="evidence" value="ECO:0007669"/>
    <property type="project" value="UniProtKB-UniRule"/>
</dbReference>
<dbReference type="GO" id="GO:0046872">
    <property type="term" value="F:metal ion binding"/>
    <property type="evidence" value="ECO:0007669"/>
    <property type="project" value="UniProtKB-KW"/>
</dbReference>
<dbReference type="GO" id="GO:0004601">
    <property type="term" value="F:peroxidase activity"/>
    <property type="evidence" value="ECO:0007669"/>
    <property type="project" value="TreeGrafter"/>
</dbReference>
<dbReference type="GO" id="GO:0042542">
    <property type="term" value="P:response to hydrogen peroxide"/>
    <property type="evidence" value="ECO:0007669"/>
    <property type="project" value="TreeGrafter"/>
</dbReference>
<dbReference type="CDD" id="cd01914">
    <property type="entry name" value="HCP"/>
    <property type="match status" value="1"/>
</dbReference>
<dbReference type="FunFam" id="1.20.1270.20:FF:000001">
    <property type="entry name" value="Hydroxylamine reductase"/>
    <property type="match status" value="1"/>
</dbReference>
<dbReference type="FunFam" id="3.40.50.2030:FF:000001">
    <property type="entry name" value="Hydroxylamine reductase"/>
    <property type="match status" value="1"/>
</dbReference>
<dbReference type="FunFam" id="3.40.50.2030:FF:000002">
    <property type="entry name" value="Hydroxylamine reductase"/>
    <property type="match status" value="1"/>
</dbReference>
<dbReference type="Gene3D" id="1.20.1270.20">
    <property type="match status" value="2"/>
</dbReference>
<dbReference type="Gene3D" id="3.40.50.2030">
    <property type="match status" value="2"/>
</dbReference>
<dbReference type="HAMAP" id="MF_00069">
    <property type="entry name" value="Hydroxylam_reduct"/>
    <property type="match status" value="1"/>
</dbReference>
<dbReference type="InterPro" id="IPR004137">
    <property type="entry name" value="HCP/CODH"/>
</dbReference>
<dbReference type="InterPro" id="IPR010048">
    <property type="entry name" value="Hydroxylam_reduct"/>
</dbReference>
<dbReference type="InterPro" id="IPR016099">
    <property type="entry name" value="Prismane-like_a/b-sand"/>
</dbReference>
<dbReference type="InterPro" id="IPR011254">
    <property type="entry name" value="Prismane-like_sf"/>
</dbReference>
<dbReference type="InterPro" id="IPR016100">
    <property type="entry name" value="Prismane_a-bundle"/>
</dbReference>
<dbReference type="NCBIfam" id="TIGR01703">
    <property type="entry name" value="hybrid_clust"/>
    <property type="match status" value="1"/>
</dbReference>
<dbReference type="NCBIfam" id="NF003658">
    <property type="entry name" value="PRK05290.1"/>
    <property type="match status" value="1"/>
</dbReference>
<dbReference type="PANTHER" id="PTHR30109">
    <property type="entry name" value="HYDROXYLAMINE REDUCTASE"/>
    <property type="match status" value="1"/>
</dbReference>
<dbReference type="PANTHER" id="PTHR30109:SF0">
    <property type="entry name" value="HYDROXYLAMINE REDUCTASE"/>
    <property type="match status" value="1"/>
</dbReference>
<dbReference type="Pfam" id="PF03063">
    <property type="entry name" value="Prismane"/>
    <property type="match status" value="1"/>
</dbReference>
<dbReference type="PIRSF" id="PIRSF000076">
    <property type="entry name" value="HCP"/>
    <property type="match status" value="1"/>
</dbReference>
<dbReference type="SUPFAM" id="SSF56821">
    <property type="entry name" value="Prismane protein-like"/>
    <property type="match status" value="1"/>
</dbReference>
<reference key="1">
    <citation type="submission" date="2007-02" db="EMBL/GenBank/DDBJ databases">
        <title>Complete sequence of Clostridium thermocellum ATCC 27405.</title>
        <authorList>
            <consortium name="US DOE Joint Genome Institute"/>
            <person name="Copeland A."/>
            <person name="Lucas S."/>
            <person name="Lapidus A."/>
            <person name="Barry K."/>
            <person name="Detter J.C."/>
            <person name="Glavina del Rio T."/>
            <person name="Hammon N."/>
            <person name="Israni S."/>
            <person name="Dalin E."/>
            <person name="Tice H."/>
            <person name="Pitluck S."/>
            <person name="Chertkov O."/>
            <person name="Brettin T."/>
            <person name="Bruce D."/>
            <person name="Han C."/>
            <person name="Tapia R."/>
            <person name="Gilna P."/>
            <person name="Schmutz J."/>
            <person name="Larimer F."/>
            <person name="Land M."/>
            <person name="Hauser L."/>
            <person name="Kyrpides N."/>
            <person name="Mikhailova N."/>
            <person name="Wu J.H.D."/>
            <person name="Newcomb M."/>
            <person name="Richardson P."/>
        </authorList>
    </citation>
    <scope>NUCLEOTIDE SEQUENCE [LARGE SCALE GENOMIC DNA]</scope>
    <source>
        <strain>ATCC 27405 / DSM 1237 / JCM 9322 / NBRC 103400 / NCIMB 10682 / NRRL B-4536 / VPI 7372</strain>
    </source>
</reference>
<accession>A3DBE8</accession>
<sequence length="542" mass="59442">MSMFCYQCQETAGGKGCTVRGVCGKNEEVAKLQDLLLYTVKGISYIVTKGNIDAAKLGNTNHEVLSSLFMTITNVNFDDGSIEKQIRKMLAVRDEMKKSVQAEGLHDAAVFSVDSRESMLKKADSVGVLSTQNEDIRSLREMITYGVKGMAAYAEHAKNIGKEDKEIYSFIYEALAATLDDSLSVDDLFALTLKTGEYGVKVMALLDEANTSRFGNPEITEVNIGVRKNPAILVSGHDLTDLEQLLEQTKGTGVDVYTHGEMLPAHYYPAFKKYDNFVGNYGNAWWKQVEEFESFHGPILFTTNCIVPPRSEEVRRRIFTTGSAGFPGCKHIEADENGKKDFSEIIELAKTLPAPDEIETGSIVGGFAHNQVMALADKVVEAVKSGAVKKFFVMAGCDGRMKSRSYYTEFAQNLPKDTVILTAGCAKYRYNKLGLGDIGGIPRVLDAGQCNDSYSLAVIALKLKEVFGLDDINKLPIAFNIAWYEQKAVIVLLALLYLGVKNIHLGPTLPGFLSPNVAKVLVEKFGIAGIGTVEDDIKLFMS</sequence>
<comment type="function">
    <text evidence="1">Catalyzes the reduction of hydroxylamine to form NH(3) and H(2)O.</text>
</comment>
<comment type="catalytic activity">
    <reaction evidence="1">
        <text>A + NH4(+) + H2O = hydroxylamine + AH2 + H(+)</text>
        <dbReference type="Rhea" id="RHEA:22052"/>
        <dbReference type="ChEBI" id="CHEBI:13193"/>
        <dbReference type="ChEBI" id="CHEBI:15377"/>
        <dbReference type="ChEBI" id="CHEBI:15378"/>
        <dbReference type="ChEBI" id="CHEBI:15429"/>
        <dbReference type="ChEBI" id="CHEBI:17499"/>
        <dbReference type="ChEBI" id="CHEBI:28938"/>
        <dbReference type="EC" id="1.7.99.1"/>
    </reaction>
</comment>
<comment type="cofactor">
    <cofactor evidence="1">
        <name>[4Fe-4S] cluster</name>
        <dbReference type="ChEBI" id="CHEBI:49883"/>
    </cofactor>
    <text evidence="1">Binds 1 [4Fe-4S] cluster.</text>
</comment>
<comment type="cofactor">
    <cofactor evidence="1">
        <name>hybrid [4Fe-2O-2S] cluster</name>
        <dbReference type="ChEBI" id="CHEBI:60519"/>
    </cofactor>
    <text evidence="1">Binds 1 hybrid [4Fe-2O-2S] cluster.</text>
</comment>
<comment type="subcellular location">
    <subcellularLocation>
        <location evidence="1">Cytoplasm</location>
    </subcellularLocation>
</comment>
<comment type="similarity">
    <text evidence="1">Belongs to the HCP family.</text>
</comment>
<protein>
    <recommendedName>
        <fullName evidence="1">Hydroxylamine reductase</fullName>
        <ecNumber evidence="1">1.7.99.1</ecNumber>
    </recommendedName>
    <alternativeName>
        <fullName evidence="1">Hybrid-cluster protein</fullName>
        <shortName evidence="1">HCP</shortName>
    </alternativeName>
    <alternativeName>
        <fullName evidence="1">Prismane protein</fullName>
    </alternativeName>
</protein>
<name>HCP_ACET2</name>
<evidence type="ECO:0000255" key="1">
    <source>
        <dbReference type="HAMAP-Rule" id="MF_00069"/>
    </source>
</evidence>
<proteinExistence type="inferred from homology"/>
<keyword id="KW-0004">4Fe-4S</keyword>
<keyword id="KW-0963">Cytoplasm</keyword>
<keyword id="KW-0408">Iron</keyword>
<keyword id="KW-0411">Iron-sulfur</keyword>
<keyword id="KW-0479">Metal-binding</keyword>
<keyword id="KW-0560">Oxidoreductase</keyword>
<keyword id="KW-1185">Reference proteome</keyword>
<organism>
    <name type="scientific">Acetivibrio thermocellus (strain ATCC 27405 / DSM 1237 / JCM 9322 / NBRC 103400 / NCIMB 10682 / NRRL B-4536 / VPI 7372)</name>
    <name type="common">Clostridium thermocellum</name>
    <dbReference type="NCBI Taxonomy" id="203119"/>
    <lineage>
        <taxon>Bacteria</taxon>
        <taxon>Bacillati</taxon>
        <taxon>Bacillota</taxon>
        <taxon>Clostridia</taxon>
        <taxon>Eubacteriales</taxon>
        <taxon>Oscillospiraceae</taxon>
        <taxon>Acetivibrio</taxon>
    </lineage>
</organism>